<evidence type="ECO:0000250" key="1"/>
<evidence type="ECO:0000255" key="2"/>
<evidence type="ECO:0000305" key="3"/>
<feature type="chain" id="PRO_0000409174" description="Spindle pole component BBP1">
    <location>
        <begin position="1"/>
        <end position="417"/>
    </location>
</feature>
<feature type="coiled-coil region" evidence="2">
    <location>
        <begin position="228"/>
        <end position="372"/>
    </location>
</feature>
<organism>
    <name type="scientific">Vanderwaltozyma polyspora (strain ATCC 22028 / DSM 70294 / BCRC 21397 / CBS 2163 / NBRC 10782 / NRRL Y-8283 / UCD 57-17)</name>
    <name type="common">Kluyveromyces polysporus</name>
    <dbReference type="NCBI Taxonomy" id="436907"/>
    <lineage>
        <taxon>Eukaryota</taxon>
        <taxon>Fungi</taxon>
        <taxon>Dikarya</taxon>
        <taxon>Ascomycota</taxon>
        <taxon>Saccharomycotina</taxon>
        <taxon>Saccharomycetes</taxon>
        <taxon>Saccharomycetales</taxon>
        <taxon>Saccharomycetaceae</taxon>
        <taxon>Vanderwaltozyma</taxon>
    </lineage>
</organism>
<dbReference type="EMBL" id="DS480378">
    <property type="protein sequence ID" value="EDO19493.1"/>
    <property type="molecule type" value="Genomic_DNA"/>
</dbReference>
<dbReference type="RefSeq" id="XP_001647351.1">
    <property type="nucleotide sequence ID" value="XM_001647301.1"/>
</dbReference>
<dbReference type="SMR" id="A7TDM3"/>
<dbReference type="FunCoup" id="A7TDM3">
    <property type="interactions" value="126"/>
</dbReference>
<dbReference type="STRING" id="436907.A7TDM3"/>
<dbReference type="GeneID" id="5547836"/>
<dbReference type="KEGG" id="vpo:Kpol_1018p21"/>
<dbReference type="eggNOG" id="ENOG502RYZ2">
    <property type="taxonomic scope" value="Eukaryota"/>
</dbReference>
<dbReference type="HOGENOM" id="CLU_711875_0_0_1"/>
<dbReference type="InParanoid" id="A7TDM3"/>
<dbReference type="OMA" id="WTMDALF"/>
<dbReference type="OrthoDB" id="4042536at2759"/>
<dbReference type="PhylomeDB" id="A7TDM3"/>
<dbReference type="Proteomes" id="UP000000267">
    <property type="component" value="Unassembled WGS sequence"/>
</dbReference>
<dbReference type="GO" id="GO:0005737">
    <property type="term" value="C:cytoplasm"/>
    <property type="evidence" value="ECO:0007669"/>
    <property type="project" value="UniProtKB-KW"/>
</dbReference>
<dbReference type="GO" id="GO:0005816">
    <property type="term" value="C:spindle pole body"/>
    <property type="evidence" value="ECO:0007669"/>
    <property type="project" value="UniProtKB-SubCell"/>
</dbReference>
<dbReference type="InterPro" id="IPR029330">
    <property type="entry name" value="Bbp1_C"/>
</dbReference>
<dbReference type="InterPro" id="IPR029328">
    <property type="entry name" value="Bbp1_N"/>
</dbReference>
<dbReference type="Pfam" id="PF15272">
    <property type="entry name" value="BBP1_C"/>
    <property type="match status" value="1"/>
</dbReference>
<dbReference type="Pfam" id="PF15271">
    <property type="entry name" value="BBP1_N"/>
    <property type="match status" value="1"/>
</dbReference>
<accession>A7TDM3</accession>
<reference key="1">
    <citation type="journal article" date="2007" name="Proc. Natl. Acad. Sci. U.S.A.">
        <title>Independent sorting-out of thousands of duplicated gene pairs in two yeast species descended from a whole-genome duplication.</title>
        <authorList>
            <person name="Scannell D.R."/>
            <person name="Frank A.C."/>
            <person name="Conant G.C."/>
            <person name="Byrne K.P."/>
            <person name="Woolfit M."/>
            <person name="Wolfe K.H."/>
        </authorList>
    </citation>
    <scope>NUCLEOTIDE SEQUENCE [LARGE SCALE GENOMIC DNA]</scope>
    <source>
        <strain>ATCC 22028 / DSM 70294 / BCRC 21397 / CBS 2163 / NBRC 10782 / NRRL Y-8283 / UCD 57-17</strain>
    </source>
</reference>
<sequence>MGSQKNYLSDDSTGGGFGVLFKWTKDALFGSRITPSRKYKEFAQDDTNYKIKRSVGKSAVGRRSRSNSWSGLDSSFYQKYDLLEDEDEDDDEKVFGMPSHLVGSGGSRSCNGDDIVGKAVPFGLDSQRRKRLQSLLDPVDLHPMREDVDTFANNLKFHNTSKLDSFDDLMQTPRQDKEFISKLFGKDTGNEPEPMSYRQFPGKFPSPGKNPTSSTKIKQVDHTDEYLQLLDKLDKNSKMIDSLNREVQNKKQQTKLQESNYKNKYMQTRNELINELRHSKKLYDNYYKLFQKYQQLKIISKESLELQNRIPTLDDRLVNETLVKDRKINELQKRIQSLQIANENLTTQREIDILKYESRIKELEAKLILQNDVHSQFHHSTSTYNNNNEFLNTDYDIDTLDTSFSRHLNINNTNYKP</sequence>
<proteinExistence type="inferred from homology"/>
<protein>
    <recommendedName>
        <fullName>Spindle pole component BBP1</fullName>
    </recommendedName>
</protein>
<gene>
    <name type="primary">BBP1</name>
    <name type="ORF">Kpol_1018p21</name>
</gene>
<keyword id="KW-0175">Coiled coil</keyword>
<keyword id="KW-0963">Cytoplasm</keyword>
<keyword id="KW-0206">Cytoskeleton</keyword>
<keyword id="KW-1185">Reference proteome</keyword>
<comment type="function">
    <text evidence="1">Component of the spindle pole body (SPB) required for insertion of the nascent SPB into the nuclear envelope and for the proper execution of spindle pole body (SPB) duplication. Connects the central plaque of the SPB with the half-bridge. Required for proper localization of CDC5 at the SPB and for proper M-phase progression (By similarity).</text>
</comment>
<comment type="subunit">
    <text evidence="1">Homodimer.</text>
</comment>
<comment type="subcellular location">
    <subcellularLocation>
        <location evidence="1">Cytoplasm</location>
        <location evidence="1">Cytoskeleton</location>
        <location evidence="1">Microtubule organizing center</location>
        <location evidence="1">Spindle pole body</location>
    </subcellularLocation>
    <text evidence="1">Associates with the periphary of the central plaque.</text>
</comment>
<comment type="similarity">
    <text evidence="3">Belongs to the BBP1 family.</text>
</comment>
<name>BBP1_VANPO</name>